<name>YCF3_CHLVU</name>
<accession>P56311</accession>
<gene>
    <name evidence="1" type="primary">ycf3</name>
</gene>
<protein>
    <recommendedName>
        <fullName evidence="1">Photosystem I assembly protein Ycf3</fullName>
    </recommendedName>
</protein>
<comment type="function">
    <text evidence="1">Essential for the assembly of the photosystem I (PSI) complex. May act as a chaperone-like factor to guide the assembly of the PSI subunits.</text>
</comment>
<comment type="subcellular location">
    <subcellularLocation>
        <location evidence="1">Plastid</location>
        <location evidence="1">Chloroplast thylakoid membrane</location>
        <topology evidence="1">Peripheral membrane protein</topology>
    </subcellularLocation>
</comment>
<comment type="similarity">
    <text evidence="1">Belongs to the Ycf3 family.</text>
</comment>
<sequence>MPRSQRNDNFIDKTFTVIADILLKILPTSNKEKQAFSYYRDGMSAQSEGEYAEALQNYYEALRLETDAYDRSYILYNIGLIHTSNGDHARALDYYYQALERNPSLPQALNNIAVIYHYRGEQALESSQTEISKLLFDKAADYWREAIRLAPTNYIEAQNWLKMTGRF</sequence>
<reference key="1">
    <citation type="journal article" date="1997" name="Proc. Natl. Acad. Sci. U.S.A.">
        <title>Complete nucleotide sequence of the chloroplast genome from the green alga Chlorella vulgaris: the existence of genes possibly involved in chloroplast division.</title>
        <authorList>
            <person name="Wakasugi T."/>
            <person name="Nagai T."/>
            <person name="Kapoor M."/>
            <person name="Sugita M."/>
            <person name="Ito M."/>
            <person name="Ito S."/>
            <person name="Tsudzuki J."/>
            <person name="Nakashima K."/>
            <person name="Tsudzuki T."/>
            <person name="Suzuki Y."/>
            <person name="Hamada A."/>
            <person name="Ohta T."/>
            <person name="Inamura A."/>
            <person name="Yoshinaga K."/>
            <person name="Sugiura M."/>
        </authorList>
    </citation>
    <scope>NUCLEOTIDE SEQUENCE [LARGE SCALE GENOMIC DNA]</scope>
    <source>
        <strain>IAM C-27 / Tamiya</strain>
    </source>
</reference>
<proteinExistence type="inferred from homology"/>
<dbReference type="EMBL" id="AB001684">
    <property type="protein sequence ID" value="BAA57864.1"/>
    <property type="molecule type" value="Genomic_DNA"/>
</dbReference>
<dbReference type="PIR" id="T07217">
    <property type="entry name" value="T07217"/>
</dbReference>
<dbReference type="RefSeq" id="NP_045789.1">
    <property type="nucleotide sequence ID" value="NC_001865.1"/>
</dbReference>
<dbReference type="SMR" id="P56311"/>
<dbReference type="GeneID" id="809173"/>
<dbReference type="GO" id="GO:0009535">
    <property type="term" value="C:chloroplast thylakoid membrane"/>
    <property type="evidence" value="ECO:0007669"/>
    <property type="project" value="UniProtKB-SubCell"/>
</dbReference>
<dbReference type="GO" id="GO:0015979">
    <property type="term" value="P:photosynthesis"/>
    <property type="evidence" value="ECO:0007669"/>
    <property type="project" value="UniProtKB-UniRule"/>
</dbReference>
<dbReference type="Gene3D" id="1.25.40.10">
    <property type="entry name" value="Tetratricopeptide repeat domain"/>
    <property type="match status" value="1"/>
</dbReference>
<dbReference type="HAMAP" id="MF_00439">
    <property type="entry name" value="Ycf3"/>
    <property type="match status" value="1"/>
</dbReference>
<dbReference type="InterPro" id="IPR022818">
    <property type="entry name" value="PSI_Ycf3_assembly"/>
</dbReference>
<dbReference type="InterPro" id="IPR011990">
    <property type="entry name" value="TPR-like_helical_dom_sf"/>
</dbReference>
<dbReference type="InterPro" id="IPR019734">
    <property type="entry name" value="TPR_rpt"/>
</dbReference>
<dbReference type="NCBIfam" id="NF002725">
    <property type="entry name" value="PRK02603.1"/>
    <property type="match status" value="1"/>
</dbReference>
<dbReference type="Pfam" id="PF00515">
    <property type="entry name" value="TPR_1"/>
    <property type="match status" value="1"/>
</dbReference>
<dbReference type="SMART" id="SM00028">
    <property type="entry name" value="TPR"/>
    <property type="match status" value="3"/>
</dbReference>
<dbReference type="SUPFAM" id="SSF48452">
    <property type="entry name" value="TPR-like"/>
    <property type="match status" value="1"/>
</dbReference>
<dbReference type="PROSITE" id="PS50005">
    <property type="entry name" value="TPR"/>
    <property type="match status" value="3"/>
</dbReference>
<dbReference type="PROSITE" id="PS50293">
    <property type="entry name" value="TPR_REGION"/>
    <property type="match status" value="1"/>
</dbReference>
<feature type="chain" id="PRO_0000217798" description="Photosystem I assembly protein Ycf3">
    <location>
        <begin position="1"/>
        <end position="167"/>
    </location>
</feature>
<feature type="repeat" description="TPR 1">
    <location>
        <begin position="35"/>
        <end position="68"/>
    </location>
</feature>
<feature type="repeat" description="TPR 2">
    <location>
        <begin position="72"/>
        <end position="105"/>
    </location>
</feature>
<feature type="repeat" description="TPR 3">
    <location>
        <begin position="120"/>
        <end position="153"/>
    </location>
</feature>
<evidence type="ECO:0000255" key="1">
    <source>
        <dbReference type="HAMAP-Rule" id="MF_00439"/>
    </source>
</evidence>
<keyword id="KW-0150">Chloroplast</keyword>
<keyword id="KW-0472">Membrane</keyword>
<keyword id="KW-0602">Photosynthesis</keyword>
<keyword id="KW-0934">Plastid</keyword>
<keyword id="KW-0677">Repeat</keyword>
<keyword id="KW-0793">Thylakoid</keyword>
<keyword id="KW-0802">TPR repeat</keyword>
<geneLocation type="chloroplast"/>
<organism>
    <name type="scientific">Chlorella vulgaris</name>
    <name type="common">Green alga</name>
    <dbReference type="NCBI Taxonomy" id="3077"/>
    <lineage>
        <taxon>Eukaryota</taxon>
        <taxon>Viridiplantae</taxon>
        <taxon>Chlorophyta</taxon>
        <taxon>core chlorophytes</taxon>
        <taxon>Trebouxiophyceae</taxon>
        <taxon>Chlorellales</taxon>
        <taxon>Chlorellaceae</taxon>
        <taxon>Chlorella clade</taxon>
        <taxon>Chlorella</taxon>
    </lineage>
</organism>